<proteinExistence type="inferred from homology"/>
<organism>
    <name type="scientific">African swine fever virus (isolate Tick/Malawi/Lil 20-1/1983)</name>
    <name type="common">ASFV</name>
    <dbReference type="NCBI Taxonomy" id="10500"/>
    <lineage>
        <taxon>Viruses</taxon>
        <taxon>Varidnaviria</taxon>
        <taxon>Bamfordvirae</taxon>
        <taxon>Nucleocytoviricota</taxon>
        <taxon>Pokkesviricetes</taxon>
        <taxon>Asfuvirales</taxon>
        <taxon>Asfarviridae</taxon>
        <taxon>Asfivirus</taxon>
        <taxon>African swine fever virus</taxon>
    </lineage>
</organism>
<sequence>MSAPLSLQTLVKKTVASTSCLSIDEHILKYCDLWWHDAPLKLYMDRGRIQIKSGFLGEDIDLCVALIIAVKENNYNLIKLFTELGANINYSLLSINTKHVRDLCRQLGAKETLEDYDIFCIFNKIMHNKTSGSVILCHEIFINNPNLENKFAAQLRRLIYKRLCGLIEIKETDELSELLVKYWYAKAVQYDYKDAICFLDEKYTDLNEWRLKCYLYYNKIYELHDIYHKEKIQIDVNEMLSLACIRDNNPLTIYYCYALGGNINQAMLTSVQYYNIGNIYFCIDLGGNAFEEGSAIARQKGYNFLSHSLVLNIYSSDASLPLNLKDPEEISSLLKNYKSKNLSIILDYSHNIL</sequence>
<name>36013_ASFM2</name>
<dbReference type="EMBL" id="U03762">
    <property type="protein sequence ID" value="AAA50539.1"/>
    <property type="molecule type" value="Genomic_DNA"/>
</dbReference>
<dbReference type="EMBL" id="AY261361">
    <property type="status" value="NOT_ANNOTATED_CDS"/>
    <property type="molecule type" value="Genomic_DNA"/>
</dbReference>
<dbReference type="SMR" id="Q65126"/>
<dbReference type="Proteomes" id="UP000000860">
    <property type="component" value="Segment"/>
</dbReference>
<dbReference type="GO" id="GO:0042330">
    <property type="term" value="P:taxis"/>
    <property type="evidence" value="ECO:0007669"/>
    <property type="project" value="InterPro"/>
</dbReference>
<dbReference type="InterPro" id="IPR002595">
    <property type="entry name" value="ASFV_MGF360"/>
</dbReference>
<dbReference type="Pfam" id="PF01671">
    <property type="entry name" value="ASFV_360"/>
    <property type="match status" value="1"/>
</dbReference>
<accession>Q65126</accession>
<feature type="chain" id="PRO_0000373287" description="Protein MGF 360-13L">
    <location>
        <begin position="1"/>
        <end position="353"/>
    </location>
</feature>
<protein>
    <recommendedName>
        <fullName>Protein MGF 360-13L</fullName>
    </recommendedName>
</protein>
<reference key="1">
    <citation type="journal article" date="1994" name="Virology">
        <title>Two novel multigene families, 530 and 300, in the terminal variable regions of African swine fever virus genome.</title>
        <authorList>
            <person name="Yozawa T."/>
            <person name="Kutish G.F."/>
            <person name="Afonso C.L."/>
            <person name="Lu Z."/>
            <person name="Rock D.L."/>
        </authorList>
    </citation>
    <scope>NUCLEOTIDE SEQUENCE [GENOMIC DNA]</scope>
</reference>
<reference key="2">
    <citation type="submission" date="2003-03" db="EMBL/GenBank/DDBJ databases">
        <title>African swine fever virus genomes.</title>
        <authorList>
            <person name="Kutish G.F."/>
            <person name="Rock D.L."/>
        </authorList>
    </citation>
    <scope>NUCLEOTIDE SEQUENCE [LARGE SCALE GENOMIC DNA]</scope>
</reference>
<gene>
    <name type="ordered locus">Mal-033</name>
</gene>
<organismHost>
    <name type="scientific">Ornithodoros</name>
    <name type="common">relapsing fever ticks</name>
    <dbReference type="NCBI Taxonomy" id="6937"/>
</organismHost>
<organismHost>
    <name type="scientific">Phacochoerus aethiopicus</name>
    <name type="common">Warthog</name>
    <dbReference type="NCBI Taxonomy" id="85517"/>
</organismHost>
<organismHost>
    <name type="scientific">Phacochoerus africanus</name>
    <name type="common">Warthog</name>
    <dbReference type="NCBI Taxonomy" id="41426"/>
</organismHost>
<organismHost>
    <name type="scientific">Potamochoerus larvatus</name>
    <name type="common">Bushpig</name>
    <dbReference type="NCBI Taxonomy" id="273792"/>
</organismHost>
<organismHost>
    <name type="scientific">Sus scrofa</name>
    <name type="common">Pig</name>
    <dbReference type="NCBI Taxonomy" id="9823"/>
</organismHost>
<comment type="function">
    <text evidence="1">Plays a role in virus cell tropism, and may be required for efficient virus replication in macrophages.</text>
</comment>
<comment type="similarity">
    <text evidence="2">Belongs to the asfivirus MGF 360 family.</text>
</comment>
<evidence type="ECO:0000250" key="1"/>
<evidence type="ECO:0000305" key="2"/>